<reference key="1">
    <citation type="journal article" date="2004" name="Nat. Biotechnol.">
        <title>The genome sequence of the capnophilic rumen bacterium Mannheimia succiniciproducens.</title>
        <authorList>
            <person name="Hong S.H."/>
            <person name="Kim J.S."/>
            <person name="Lee S.Y."/>
            <person name="In Y.H."/>
            <person name="Choi S.S."/>
            <person name="Rih J.-K."/>
            <person name="Kim C.H."/>
            <person name="Jeong H."/>
            <person name="Hur C.G."/>
            <person name="Kim J.J."/>
        </authorList>
    </citation>
    <scope>NUCLEOTIDE SEQUENCE [LARGE SCALE GENOMIC DNA]</scope>
    <source>
        <strain>KCTC 0769BP / MBEL55E</strain>
    </source>
</reference>
<evidence type="ECO:0000255" key="1">
    <source>
        <dbReference type="HAMAP-Rule" id="MF_00316"/>
    </source>
</evidence>
<sequence>MTITISAVILAGGLGRRMGGVDKGLQFWRGKPLIETVYQRLHRQIERISINANRNREIYARFGVPVFSDRLAGFQGPLSGILTALERATTDYVLFVPCDCPNFPLNLLEKLKSAVEFSQISLAYAHDGERDHPTFCLVSTQLKNALADYLAGGERRMLYFMQMHGAVAVDFSTEKQGFININNLADLNSP</sequence>
<accession>Q65QU6</accession>
<comment type="function">
    <text evidence="1">Transfers a GMP moiety from GTP to Mo-molybdopterin (Mo-MPT) cofactor (Moco or molybdenum cofactor) to form Mo-molybdopterin guanine dinucleotide (Mo-MGD) cofactor.</text>
</comment>
<comment type="catalytic activity">
    <reaction evidence="1">
        <text>Mo-molybdopterin + GTP + H(+) = Mo-molybdopterin guanine dinucleotide + diphosphate</text>
        <dbReference type="Rhea" id="RHEA:34243"/>
        <dbReference type="ChEBI" id="CHEBI:15378"/>
        <dbReference type="ChEBI" id="CHEBI:33019"/>
        <dbReference type="ChEBI" id="CHEBI:37565"/>
        <dbReference type="ChEBI" id="CHEBI:71302"/>
        <dbReference type="ChEBI" id="CHEBI:71310"/>
        <dbReference type="EC" id="2.7.7.77"/>
    </reaction>
</comment>
<comment type="cofactor">
    <cofactor evidence="1">
        <name>Mg(2+)</name>
        <dbReference type="ChEBI" id="CHEBI:18420"/>
    </cofactor>
</comment>
<comment type="subunit">
    <text evidence="1">Monomer.</text>
</comment>
<comment type="subcellular location">
    <subcellularLocation>
        <location evidence="1">Cytoplasm</location>
    </subcellularLocation>
</comment>
<comment type="domain">
    <text evidence="1">The N-terminal domain determines nucleotide recognition and specific binding, while the C-terminal domain determines the specific binding to the target protein.</text>
</comment>
<comment type="similarity">
    <text evidence="1">Belongs to the MobA family.</text>
</comment>
<name>MOBA_MANSM</name>
<keyword id="KW-0963">Cytoplasm</keyword>
<keyword id="KW-0342">GTP-binding</keyword>
<keyword id="KW-0460">Magnesium</keyword>
<keyword id="KW-0479">Metal-binding</keyword>
<keyword id="KW-0501">Molybdenum cofactor biosynthesis</keyword>
<keyword id="KW-0547">Nucleotide-binding</keyword>
<keyword id="KW-0808">Transferase</keyword>
<feature type="chain" id="PRO_1000019122" description="Molybdenum cofactor guanylyltransferase">
    <location>
        <begin position="1"/>
        <end position="190"/>
    </location>
</feature>
<feature type="binding site" evidence="1">
    <location>
        <begin position="10"/>
        <end position="12"/>
    </location>
    <ligand>
        <name>GTP</name>
        <dbReference type="ChEBI" id="CHEBI:37565"/>
    </ligand>
</feature>
<feature type="binding site" evidence="1">
    <location>
        <position position="23"/>
    </location>
    <ligand>
        <name>GTP</name>
        <dbReference type="ChEBI" id="CHEBI:37565"/>
    </ligand>
</feature>
<feature type="binding site" evidence="1">
    <location>
        <position position="51"/>
    </location>
    <ligand>
        <name>GTP</name>
        <dbReference type="ChEBI" id="CHEBI:37565"/>
    </ligand>
</feature>
<feature type="binding site" evidence="1">
    <location>
        <position position="69"/>
    </location>
    <ligand>
        <name>GTP</name>
        <dbReference type="ChEBI" id="CHEBI:37565"/>
    </ligand>
</feature>
<feature type="binding site" evidence="1">
    <location>
        <position position="99"/>
    </location>
    <ligand>
        <name>GTP</name>
        <dbReference type="ChEBI" id="CHEBI:37565"/>
    </ligand>
</feature>
<feature type="binding site" evidence="1">
    <location>
        <position position="99"/>
    </location>
    <ligand>
        <name>Mg(2+)</name>
        <dbReference type="ChEBI" id="CHEBI:18420"/>
    </ligand>
</feature>
<protein>
    <recommendedName>
        <fullName evidence="1">Molybdenum cofactor guanylyltransferase</fullName>
        <shortName evidence="1">MoCo guanylyltransferase</shortName>
        <ecNumber evidence="1">2.7.7.77</ecNumber>
    </recommendedName>
    <alternativeName>
        <fullName evidence="1">GTP:molybdopterin guanylyltransferase</fullName>
    </alternativeName>
    <alternativeName>
        <fullName evidence="1">Mo-MPT guanylyltransferase</fullName>
    </alternativeName>
    <alternativeName>
        <fullName evidence="1">Molybdopterin guanylyltransferase</fullName>
    </alternativeName>
    <alternativeName>
        <fullName evidence="1">Molybdopterin-guanine dinucleotide synthase</fullName>
        <shortName evidence="1">MGD synthase</shortName>
    </alternativeName>
</protein>
<dbReference type="EC" id="2.7.7.77" evidence="1"/>
<dbReference type="EMBL" id="AE016827">
    <property type="protein sequence ID" value="AAU38664.1"/>
    <property type="molecule type" value="Genomic_DNA"/>
</dbReference>
<dbReference type="RefSeq" id="WP_011201212.1">
    <property type="nucleotide sequence ID" value="NC_006300.1"/>
</dbReference>
<dbReference type="SMR" id="Q65QU6"/>
<dbReference type="STRING" id="221988.MS2057"/>
<dbReference type="KEGG" id="msu:MS2057"/>
<dbReference type="eggNOG" id="COG0746">
    <property type="taxonomic scope" value="Bacteria"/>
</dbReference>
<dbReference type="HOGENOM" id="CLU_055597_5_1_6"/>
<dbReference type="OrthoDB" id="9788394at2"/>
<dbReference type="Proteomes" id="UP000000607">
    <property type="component" value="Chromosome"/>
</dbReference>
<dbReference type="GO" id="GO:0005737">
    <property type="term" value="C:cytoplasm"/>
    <property type="evidence" value="ECO:0007669"/>
    <property type="project" value="UniProtKB-SubCell"/>
</dbReference>
<dbReference type="GO" id="GO:0005525">
    <property type="term" value="F:GTP binding"/>
    <property type="evidence" value="ECO:0007669"/>
    <property type="project" value="UniProtKB-UniRule"/>
</dbReference>
<dbReference type="GO" id="GO:0046872">
    <property type="term" value="F:metal ion binding"/>
    <property type="evidence" value="ECO:0007669"/>
    <property type="project" value="UniProtKB-KW"/>
</dbReference>
<dbReference type="GO" id="GO:0061603">
    <property type="term" value="F:molybdenum cofactor guanylyltransferase activity"/>
    <property type="evidence" value="ECO:0007669"/>
    <property type="project" value="UniProtKB-EC"/>
</dbReference>
<dbReference type="GO" id="GO:1902758">
    <property type="term" value="P:bis(molybdopterin guanine dinucleotide)molybdenum biosynthetic process"/>
    <property type="evidence" value="ECO:0007669"/>
    <property type="project" value="TreeGrafter"/>
</dbReference>
<dbReference type="CDD" id="cd02503">
    <property type="entry name" value="MobA"/>
    <property type="match status" value="1"/>
</dbReference>
<dbReference type="Gene3D" id="3.90.550.10">
    <property type="entry name" value="Spore Coat Polysaccharide Biosynthesis Protein SpsA, Chain A"/>
    <property type="match status" value="1"/>
</dbReference>
<dbReference type="HAMAP" id="MF_00316">
    <property type="entry name" value="MobA"/>
    <property type="match status" value="1"/>
</dbReference>
<dbReference type="InterPro" id="IPR025877">
    <property type="entry name" value="MobA-like_NTP_Trfase"/>
</dbReference>
<dbReference type="InterPro" id="IPR013482">
    <property type="entry name" value="Molybde_CF_guanTrfase"/>
</dbReference>
<dbReference type="InterPro" id="IPR029044">
    <property type="entry name" value="Nucleotide-diphossugar_trans"/>
</dbReference>
<dbReference type="NCBIfam" id="TIGR02665">
    <property type="entry name" value="molyb_mobA"/>
    <property type="match status" value="1"/>
</dbReference>
<dbReference type="PANTHER" id="PTHR19136">
    <property type="entry name" value="MOLYBDENUM COFACTOR GUANYLYLTRANSFERASE"/>
    <property type="match status" value="1"/>
</dbReference>
<dbReference type="PANTHER" id="PTHR19136:SF81">
    <property type="entry name" value="MOLYBDENUM COFACTOR GUANYLYLTRANSFERASE"/>
    <property type="match status" value="1"/>
</dbReference>
<dbReference type="Pfam" id="PF12804">
    <property type="entry name" value="NTP_transf_3"/>
    <property type="match status" value="1"/>
</dbReference>
<dbReference type="SUPFAM" id="SSF53448">
    <property type="entry name" value="Nucleotide-diphospho-sugar transferases"/>
    <property type="match status" value="1"/>
</dbReference>
<proteinExistence type="inferred from homology"/>
<organism>
    <name type="scientific">Mannheimia succiniciproducens (strain KCTC 0769BP / MBEL55E)</name>
    <dbReference type="NCBI Taxonomy" id="221988"/>
    <lineage>
        <taxon>Bacteria</taxon>
        <taxon>Pseudomonadati</taxon>
        <taxon>Pseudomonadota</taxon>
        <taxon>Gammaproteobacteria</taxon>
        <taxon>Pasteurellales</taxon>
        <taxon>Pasteurellaceae</taxon>
        <taxon>Basfia</taxon>
    </lineage>
</organism>
<gene>
    <name evidence="1" type="primary">mobA</name>
    <name type="ordered locus">MS2057</name>
</gene>